<gene>
    <name evidence="1" type="primary">iolA</name>
    <name type="ordered locus">BC_2290</name>
</gene>
<keyword id="KW-0520">NAD</keyword>
<keyword id="KW-0560">Oxidoreductase</keyword>
<keyword id="KW-1185">Reference proteome</keyword>
<protein>
    <recommendedName>
        <fullName evidence="1">Malonate-semialdehyde dehydrogenase</fullName>
        <shortName evidence="1">MSA dehydrogenase</shortName>
        <ecNumber evidence="1">1.2.1.27</ecNumber>
    </recommendedName>
    <alternativeName>
        <fullName evidence="1">Methylmalonate-semialdehyde dehydrogenase</fullName>
        <shortName evidence="1">MMSA dehydrogenase</shortName>
        <shortName evidence="1">MSDH</shortName>
    </alternativeName>
</protein>
<reference key="1">
    <citation type="journal article" date="2003" name="Nature">
        <title>Genome sequence of Bacillus cereus and comparative analysis with Bacillus anthracis.</title>
        <authorList>
            <person name="Ivanova N."/>
            <person name="Sorokin A."/>
            <person name="Anderson I."/>
            <person name="Galleron N."/>
            <person name="Candelon B."/>
            <person name="Kapatral V."/>
            <person name="Bhattacharyya A."/>
            <person name="Reznik G."/>
            <person name="Mikhailova N."/>
            <person name="Lapidus A."/>
            <person name="Chu L."/>
            <person name="Mazur M."/>
            <person name="Goltsman E."/>
            <person name="Larsen N."/>
            <person name="D'Souza M."/>
            <person name="Walunas T."/>
            <person name="Grechkin Y."/>
            <person name="Pusch G."/>
            <person name="Haselkorn R."/>
            <person name="Fonstein M."/>
            <person name="Ehrlich S.D."/>
            <person name="Overbeek R."/>
            <person name="Kyrpides N.C."/>
        </authorList>
    </citation>
    <scope>NUCLEOTIDE SEQUENCE [LARGE SCALE GENOMIC DNA]</scope>
    <source>
        <strain>ATCC 14579 / DSM 31 / CCUG 7414 / JCM 2152 / NBRC 15305 / NCIMB 9373 / NCTC 2599 / NRRL B-3711</strain>
    </source>
</reference>
<dbReference type="EC" id="1.2.1.27" evidence="1"/>
<dbReference type="EMBL" id="AE016877">
    <property type="protein sequence ID" value="AAP09254.1"/>
    <property type="molecule type" value="Genomic_DNA"/>
</dbReference>
<dbReference type="RefSeq" id="NP_832053.1">
    <property type="nucleotide sequence ID" value="NC_004722.1"/>
</dbReference>
<dbReference type="RefSeq" id="WP_000633345.1">
    <property type="nucleotide sequence ID" value="NC_004722.1"/>
</dbReference>
<dbReference type="SMR" id="Q81DR5"/>
<dbReference type="STRING" id="226900.BC_2290"/>
<dbReference type="KEGG" id="bce:BC2290"/>
<dbReference type="PATRIC" id="fig|226900.8.peg.2314"/>
<dbReference type="HOGENOM" id="CLU_005391_1_10_9"/>
<dbReference type="UniPathway" id="UPA00076">
    <property type="reaction ID" value="UER00148"/>
</dbReference>
<dbReference type="Proteomes" id="UP000001417">
    <property type="component" value="Chromosome"/>
</dbReference>
<dbReference type="GO" id="GO:0018478">
    <property type="term" value="F:malonate-semialdehyde dehydrogenase (acetylating) activity"/>
    <property type="evidence" value="ECO:0007669"/>
    <property type="project" value="UniProtKB-UniRule"/>
</dbReference>
<dbReference type="GO" id="GO:0004491">
    <property type="term" value="F:methylmalonate-semialdehyde dehydrogenase (acylating, NAD) activity"/>
    <property type="evidence" value="ECO:0000318"/>
    <property type="project" value="GO_Central"/>
</dbReference>
<dbReference type="GO" id="GO:0019310">
    <property type="term" value="P:inositol catabolic process"/>
    <property type="evidence" value="ECO:0007669"/>
    <property type="project" value="UniProtKB-UniRule"/>
</dbReference>
<dbReference type="GO" id="GO:0006210">
    <property type="term" value="P:thymine catabolic process"/>
    <property type="evidence" value="ECO:0000318"/>
    <property type="project" value="GO_Central"/>
</dbReference>
<dbReference type="GO" id="GO:0006574">
    <property type="term" value="P:valine catabolic process"/>
    <property type="evidence" value="ECO:0000318"/>
    <property type="project" value="GO_Central"/>
</dbReference>
<dbReference type="CDD" id="cd07085">
    <property type="entry name" value="ALDH_F6_MMSDH"/>
    <property type="match status" value="1"/>
</dbReference>
<dbReference type="FunFam" id="3.40.309.10:FF:000002">
    <property type="entry name" value="Methylmalonate-semialdehyde dehydrogenase (Acylating)"/>
    <property type="match status" value="1"/>
</dbReference>
<dbReference type="FunFam" id="3.40.605.10:FF:000003">
    <property type="entry name" value="Methylmalonate-semialdehyde dehydrogenase [acylating]"/>
    <property type="match status" value="1"/>
</dbReference>
<dbReference type="Gene3D" id="3.40.605.10">
    <property type="entry name" value="Aldehyde Dehydrogenase, Chain A, domain 1"/>
    <property type="match status" value="1"/>
</dbReference>
<dbReference type="Gene3D" id="3.40.309.10">
    <property type="entry name" value="Aldehyde Dehydrogenase, Chain A, domain 2"/>
    <property type="match status" value="1"/>
</dbReference>
<dbReference type="HAMAP" id="MF_01670">
    <property type="entry name" value="IolA"/>
    <property type="match status" value="1"/>
</dbReference>
<dbReference type="InterPro" id="IPR016161">
    <property type="entry name" value="Ald_DH/histidinol_DH"/>
</dbReference>
<dbReference type="InterPro" id="IPR016163">
    <property type="entry name" value="Ald_DH_C"/>
</dbReference>
<dbReference type="InterPro" id="IPR016160">
    <property type="entry name" value="Ald_DH_CS_CYS"/>
</dbReference>
<dbReference type="InterPro" id="IPR016162">
    <property type="entry name" value="Ald_DH_N"/>
</dbReference>
<dbReference type="InterPro" id="IPR015590">
    <property type="entry name" value="Aldehyde_DH_dom"/>
</dbReference>
<dbReference type="InterPro" id="IPR010061">
    <property type="entry name" value="MeMal-semiAld_DH"/>
</dbReference>
<dbReference type="InterPro" id="IPR023510">
    <property type="entry name" value="MSDH_GmP_bac"/>
</dbReference>
<dbReference type="NCBIfam" id="TIGR01722">
    <property type="entry name" value="MMSDH"/>
    <property type="match status" value="1"/>
</dbReference>
<dbReference type="PANTHER" id="PTHR43866">
    <property type="entry name" value="MALONATE-SEMIALDEHYDE DEHYDROGENASE"/>
    <property type="match status" value="1"/>
</dbReference>
<dbReference type="PANTHER" id="PTHR43866:SF4">
    <property type="entry name" value="MALONATE-SEMIALDEHYDE DEHYDROGENASE"/>
    <property type="match status" value="1"/>
</dbReference>
<dbReference type="Pfam" id="PF00171">
    <property type="entry name" value="Aldedh"/>
    <property type="match status" value="1"/>
</dbReference>
<dbReference type="SUPFAM" id="SSF53720">
    <property type="entry name" value="ALDH-like"/>
    <property type="match status" value="1"/>
</dbReference>
<dbReference type="PROSITE" id="PS00070">
    <property type="entry name" value="ALDEHYDE_DEHYDR_CYS"/>
    <property type="match status" value="1"/>
</dbReference>
<feature type="chain" id="PRO_0000352321" description="Malonate-semialdehyde dehydrogenase">
    <location>
        <begin position="1"/>
        <end position="486"/>
    </location>
</feature>
<feature type="active site" description="Nucleophile" evidence="1">
    <location>
        <position position="286"/>
    </location>
</feature>
<feature type="binding site" evidence="1">
    <location>
        <position position="154"/>
    </location>
    <ligand>
        <name>NAD(+)</name>
        <dbReference type="ChEBI" id="CHEBI:57540"/>
    </ligand>
</feature>
<feature type="binding site" evidence="1">
    <location>
        <position position="178"/>
    </location>
    <ligand>
        <name>NAD(+)</name>
        <dbReference type="ChEBI" id="CHEBI:57540"/>
    </ligand>
</feature>
<feature type="binding site" evidence="1">
    <location>
        <position position="181"/>
    </location>
    <ligand>
        <name>NAD(+)</name>
        <dbReference type="ChEBI" id="CHEBI:57540"/>
    </ligand>
</feature>
<feature type="binding site" evidence="1">
    <location>
        <position position="182"/>
    </location>
    <ligand>
        <name>NAD(+)</name>
        <dbReference type="ChEBI" id="CHEBI:57540"/>
    </ligand>
</feature>
<feature type="binding site" evidence="1">
    <location>
        <position position="231"/>
    </location>
    <ligand>
        <name>NAD(+)</name>
        <dbReference type="ChEBI" id="CHEBI:57540"/>
    </ligand>
</feature>
<feature type="binding site" evidence="1">
    <location>
        <position position="386"/>
    </location>
    <ligand>
        <name>NAD(+)</name>
        <dbReference type="ChEBI" id="CHEBI:57540"/>
    </ligand>
</feature>
<comment type="function">
    <text evidence="1">Catalyzes the oxidation of malonate semialdehyde (MSA) and methylmalonate semialdehyde (MMSA) into acetyl-CoA and propanoyl-CoA, respectively. Is involved in a myo-inositol catabolic pathway. Bicarbonate, and not CO2, is the end-product of the enzymatic reaction.</text>
</comment>
<comment type="catalytic activity">
    <reaction evidence="1">
        <text>3-oxopropanoate + NAD(+) + CoA + H2O = hydrogencarbonate + acetyl-CoA + NADH + H(+)</text>
        <dbReference type="Rhea" id="RHEA:76615"/>
        <dbReference type="ChEBI" id="CHEBI:15377"/>
        <dbReference type="ChEBI" id="CHEBI:15378"/>
        <dbReference type="ChEBI" id="CHEBI:17544"/>
        <dbReference type="ChEBI" id="CHEBI:33190"/>
        <dbReference type="ChEBI" id="CHEBI:57287"/>
        <dbReference type="ChEBI" id="CHEBI:57288"/>
        <dbReference type="ChEBI" id="CHEBI:57540"/>
        <dbReference type="ChEBI" id="CHEBI:57945"/>
        <dbReference type="EC" id="1.2.1.27"/>
    </reaction>
    <physiologicalReaction direction="left-to-right" evidence="1">
        <dbReference type="Rhea" id="RHEA:76616"/>
    </physiologicalReaction>
</comment>
<comment type="catalytic activity">
    <reaction evidence="1">
        <text>2-methyl-3-oxopropanoate + NAD(+) + CoA + H2O = propanoyl-CoA + hydrogencarbonate + NADH + H(+)</text>
        <dbReference type="Rhea" id="RHEA:20804"/>
        <dbReference type="ChEBI" id="CHEBI:15377"/>
        <dbReference type="ChEBI" id="CHEBI:15378"/>
        <dbReference type="ChEBI" id="CHEBI:17544"/>
        <dbReference type="ChEBI" id="CHEBI:57287"/>
        <dbReference type="ChEBI" id="CHEBI:57392"/>
        <dbReference type="ChEBI" id="CHEBI:57540"/>
        <dbReference type="ChEBI" id="CHEBI:57700"/>
        <dbReference type="ChEBI" id="CHEBI:57945"/>
        <dbReference type="EC" id="1.2.1.27"/>
    </reaction>
    <physiologicalReaction direction="left-to-right" evidence="1">
        <dbReference type="Rhea" id="RHEA:20805"/>
    </physiologicalReaction>
</comment>
<comment type="pathway">
    <text evidence="1">Polyol metabolism; myo-inositol degradation into acetyl-CoA; acetyl-CoA from myo-inositol: step 7/7.</text>
</comment>
<comment type="subunit">
    <text evidence="1">Homotetramer.</text>
</comment>
<comment type="similarity">
    <text evidence="1">Belongs to the aldehyde dehydrogenase family. IolA subfamily.</text>
</comment>
<proteinExistence type="inferred from homology"/>
<name>IOLA_BACCR</name>
<evidence type="ECO:0000255" key="1">
    <source>
        <dbReference type="HAMAP-Rule" id="MF_01670"/>
    </source>
</evidence>
<accession>Q81DR5</accession>
<organism>
    <name type="scientific">Bacillus cereus (strain ATCC 14579 / DSM 31 / CCUG 7414 / JCM 2152 / NBRC 15305 / NCIMB 9373 / NCTC 2599 / NRRL B-3711)</name>
    <dbReference type="NCBI Taxonomy" id="226900"/>
    <lineage>
        <taxon>Bacteria</taxon>
        <taxon>Bacillati</taxon>
        <taxon>Bacillota</taxon>
        <taxon>Bacilli</taxon>
        <taxon>Bacillales</taxon>
        <taxon>Bacillaceae</taxon>
        <taxon>Bacillus</taxon>
        <taxon>Bacillus cereus group</taxon>
    </lineage>
</organism>
<sequence length="486" mass="52954">MITTEIKRVKNHINGEWVESTGTEVEAVPNPATGKIIAYVPLSPKEDVEKAVEAAKAAFETWSKVPVPNRSRNLYKYLQLLQENKDELAKIITLENGKTLTDATGEVQRGIEAVELATSTPNLMMGQALPNIASGIDGSIWRYPIGVVAGITPFNFPMMIPLWMFPLAIACGNTFVLKTSERTPLLAERLVELFYEAGFPKGVLNLVQGGKDVVNSILENKDIQAVSFVGSEPVARYVYETGTKHGKRVQALAGAKNHAIVMPDCNLEKTVQGVIGSAFASSGERCMACSVVAVVDEIADEFIDVLVAETKKLKVGDGFNEDNYVGPLIRESHKERVLGYINSGVADGATLLVDGRKINEEVGEGYFVGATIFDGVNQEMKIWQDEIFAPVLSIVRVKDLEEGIKLTNQSKFANGAVIYTSNGKHAQTFRDNIDAGMIGVNVNVPAPMAFFAFAGNKASFFGDLSTNGTDGVQFYTRKKVVTERWF</sequence>